<comment type="function">
    <text evidence="1">Precursor from which the VPg molecule is probably released at the onset of the RNA synthesis. Essential for virus replication (By similarity).</text>
</comment>
<comment type="subcellular location">
    <subcellularLocation>
        <location evidence="5">Host membrane</location>
        <topology evidence="5">Multi-pass membrane protein</topology>
    </subcellularLocation>
</comment>
<comment type="alternative products">
    <event type="ribosomal frameshifting"/>
    <isoform>
        <id>Q5NDN0-1</id>
        <name>Genome-linked protein precursor</name>
        <sequence type="displayed"/>
    </isoform>
    <isoform>
        <id>Q5NDM9-1</id>
        <name>Protein P2-P3</name>
        <sequence type="external"/>
    </isoform>
</comment>
<comment type="miscellaneous">
    <molecule>Isoform Genome-linked protein precursor</molecule>
    <text>Produced by conventional translation.</text>
</comment>
<comment type="similarity">
    <text evidence="5">Belongs to the peptidase S39B family.</text>
</comment>
<accession>Q5NDN0</accession>
<organismHost>
    <name type="scientific">Euphorbia pulcherrima</name>
    <name type="common">Poinsettia</name>
    <name type="synonym">Poinsettia pulcherrima</name>
    <dbReference type="NCBI Taxonomy" id="37495"/>
</organismHost>
<keyword id="KW-1043">Host membrane</keyword>
<keyword id="KW-0378">Hydrolase</keyword>
<keyword id="KW-0472">Membrane</keyword>
<keyword id="KW-0645">Protease</keyword>
<keyword id="KW-1185">Reference proteome</keyword>
<keyword id="KW-0688">Ribosomal frameshifting</keyword>
<keyword id="KW-0720">Serine protease</keyword>
<keyword id="KW-0732">Signal</keyword>
<keyword id="KW-0812">Transmembrane</keyword>
<keyword id="KW-1133">Transmembrane helix</keyword>
<proteinExistence type="inferred from homology"/>
<name>P1_PNLV</name>
<reference key="1">
    <citation type="journal article" date="2005" name="Virology">
        <title>Poinsettia latent virus is not a cryptic virus, but a natural polerovirus-sobemovirus hybrid.</title>
        <authorList>
            <person name="Aus dem Siepen M."/>
            <person name="Pohl J.O."/>
            <person name="Koo B.J."/>
            <person name="Wege C."/>
            <person name="Jeske H."/>
        </authorList>
    </citation>
    <scope>NUCLEOTIDE SEQUENCE [GENOMIC RNA]</scope>
</reference>
<organism>
    <name type="scientific">Poinsettia latent virus (isolate Euphorbia pulcherrima/Germany/Siepen/2005)</name>
    <name type="common">PnLV</name>
    <name type="synonym">Poinsettia cryptic virus</name>
    <dbReference type="NCBI Taxonomy" id="686943"/>
    <lineage>
        <taxon>Viruses</taxon>
        <taxon>Riboviria</taxon>
        <taxon>Orthornavirae</taxon>
        <taxon>Pisuviricota</taxon>
        <taxon>Pisoniviricetes</taxon>
        <taxon>Sobelivirales</taxon>
        <taxon>Solemoviridae</taxon>
        <taxon>Polemovirus</taxon>
        <taxon>Poinsettia latent virus</taxon>
    </lineage>
</organism>
<gene>
    <name type="ORF">ORF2</name>
</gene>
<dbReference type="EC" id="3.4.21.-"/>
<dbReference type="EMBL" id="AJ867490">
    <property type="protein sequence ID" value="CAI34770.1"/>
    <property type="molecule type" value="Genomic_RNA"/>
</dbReference>
<dbReference type="RefSeq" id="YP_002308461.1">
    <property type="nucleotide sequence ID" value="NC_011543.1"/>
</dbReference>
<dbReference type="KEGG" id="vg:7040107"/>
<dbReference type="Proteomes" id="UP000001670">
    <property type="component" value="Segment"/>
</dbReference>
<dbReference type="GO" id="GO:0033644">
    <property type="term" value="C:host cell membrane"/>
    <property type="evidence" value="ECO:0007669"/>
    <property type="project" value="UniProtKB-SubCell"/>
</dbReference>
<dbReference type="GO" id="GO:0016020">
    <property type="term" value="C:membrane"/>
    <property type="evidence" value="ECO:0007669"/>
    <property type="project" value="UniProtKB-KW"/>
</dbReference>
<dbReference type="GO" id="GO:0004252">
    <property type="term" value="F:serine-type endopeptidase activity"/>
    <property type="evidence" value="ECO:0007669"/>
    <property type="project" value="InterPro"/>
</dbReference>
<dbReference type="GO" id="GO:0070008">
    <property type="term" value="F:serine-type exopeptidase activity"/>
    <property type="evidence" value="ECO:0007669"/>
    <property type="project" value="InterPro"/>
</dbReference>
<dbReference type="GO" id="GO:0006508">
    <property type="term" value="P:proteolysis"/>
    <property type="evidence" value="ECO:0007669"/>
    <property type="project" value="UniProtKB-KW"/>
</dbReference>
<dbReference type="GO" id="GO:0075523">
    <property type="term" value="P:viral translational frameshifting"/>
    <property type="evidence" value="ECO:0007669"/>
    <property type="project" value="UniProtKB-KW"/>
</dbReference>
<dbReference type="Gene3D" id="2.40.10.10">
    <property type="entry name" value="Trypsin-like serine proteases"/>
    <property type="match status" value="2"/>
</dbReference>
<dbReference type="InterPro" id="IPR018019">
    <property type="entry name" value="Luteovirus_Orf2"/>
</dbReference>
<dbReference type="InterPro" id="IPR009003">
    <property type="entry name" value="Peptidase_S1_PA"/>
</dbReference>
<dbReference type="InterPro" id="IPR043504">
    <property type="entry name" value="Peptidase_S1_PA_chymotrypsin"/>
</dbReference>
<dbReference type="InterPro" id="IPR000382">
    <property type="entry name" value="Peptidase_S39B_luteovirus"/>
</dbReference>
<dbReference type="Pfam" id="PF02122">
    <property type="entry name" value="Peptidase_S39"/>
    <property type="match status" value="1"/>
</dbReference>
<dbReference type="PRINTS" id="PR00913">
    <property type="entry name" value="LVIRUSORF2"/>
</dbReference>
<dbReference type="SUPFAM" id="SSF50494">
    <property type="entry name" value="Trypsin-like serine proteases"/>
    <property type="match status" value="1"/>
</dbReference>
<dbReference type="PROSITE" id="PS51868">
    <property type="entry name" value="PEPTIDASE_S39"/>
    <property type="match status" value="1"/>
</dbReference>
<evidence type="ECO:0000250" key="1"/>
<evidence type="ECO:0000255" key="2"/>
<evidence type="ECO:0000255" key="3">
    <source>
        <dbReference type="PROSITE-ProRule" id="PRU01216"/>
    </source>
</evidence>
<evidence type="ECO:0000256" key="4">
    <source>
        <dbReference type="SAM" id="MobiDB-lite"/>
    </source>
</evidence>
<evidence type="ECO:0000305" key="5"/>
<protein>
    <recommendedName>
        <fullName>Genome-linked protein precursor</fullName>
    </recommendedName>
    <component>
        <recommendedName>
            <fullName>Serine protease</fullName>
            <ecNumber>3.4.21.-</ecNumber>
        </recommendedName>
    </component>
    <component>
        <recommendedName>
            <fullName>VPg</fullName>
        </recommendedName>
    </component>
</protein>
<feature type="signal peptide" evidence="2">
    <location>
        <begin position="1"/>
        <end position="25"/>
    </location>
</feature>
<feature type="chain" id="PRO_0000402477" description="Genome-linked protein precursor">
    <location>
        <begin position="26"/>
        <end position="660"/>
    </location>
</feature>
<feature type="chain" id="PRO_0000402478" description="Serine protease" evidence="2">
    <location>
        <begin position="222"/>
        <end position="416"/>
    </location>
</feature>
<feature type="chain" id="PRO_0000402479" description="VPg" evidence="2">
    <location>
        <begin position="417"/>
        <end position="660"/>
    </location>
</feature>
<feature type="transmembrane region" description="Helical" evidence="2">
    <location>
        <begin position="131"/>
        <end position="151"/>
    </location>
</feature>
<feature type="transmembrane region" description="Helical" evidence="2">
    <location>
        <begin position="165"/>
        <end position="185"/>
    </location>
</feature>
<feature type="domain" description="Peptidase S39" evidence="3">
    <location>
        <begin position="224"/>
        <end position="416"/>
    </location>
</feature>
<feature type="region of interest" description="Disordered" evidence="4">
    <location>
        <begin position="463"/>
        <end position="490"/>
    </location>
</feature>
<feature type="region of interest" description="Disordered" evidence="4">
    <location>
        <begin position="595"/>
        <end position="660"/>
    </location>
</feature>
<feature type="active site" description="For protease activity" evidence="3">
    <location>
        <position position="272"/>
    </location>
</feature>
<feature type="active site" description="For protease activity" evidence="3">
    <location>
        <position position="304"/>
    </location>
</feature>
<feature type="active site" description="For protease activity" evidence="3">
    <location>
        <position position="373"/>
    </location>
</feature>
<feature type="site" description="Cleavage; by viral serine protease" evidence="2">
    <location>
        <begin position="221"/>
        <end position="222"/>
    </location>
</feature>
<feature type="site" description="Cleavage; by viral serine protease" evidence="2">
    <location>
        <begin position="416"/>
        <end position="417"/>
    </location>
</feature>
<sequence length="660" mass="72353">MALLGIKLMTLVFAAWLSCCHSSSALPSSGLSGPCLNHSCLLRNSLNGASQWGTILHSPAVGSNCPPCPMMSIMGCSPPKPLQSNSYGVLCSTIASKAKQDLKLCWKEVQTRSEMYSKRISAALIDSLHQAVGMLLMIIIWIWSSIFLVVYHVLAYMTTYHLSSAVCVGFLIFCTICAFRLISWICGDLLAFNVSGLTPIWVNFSESSCPAGLSLRRYKNEKTVEGYKPFIIPQKSPKKSVIELSFSNGSHLGYATCVRLWDGSICLMTAKHCLVKEALLKGRVAGHSLPVKNFDLFLTCDEIDFSLLRGPKQWEAYLGVKGADLITSNRIGRSPVTFYNLSKDGEWLANSAQITGRHGKLCSVLSNTSPGDSGTPYYSGKNVVGIHKGTSELENYNLMIPIPNIPGLTSPDFKFETTNVRGNLYNDEGFRLSVGEDDKAEHWTDRLMKSITFKTKRWADWAEEESESDDERGKVVPPAKPSNYGEGCPPEHNQYLSDVGDLLTKVIGPEQNEKCVDILMGIMGVDKNEVAPHKEEKAEKGNEAVVSATVKTVKEPTTQCDEDIISEIVKRVVDKMNLKAIEKSVVEILAEKAMTKAPRGKRKNSKDTSRPSTPGSYIIPAKRTPDSGPVEKSLNSTGRAKEESPSGARTLPGNIPAWVR</sequence>